<reference key="1">
    <citation type="journal article" date="1999" name="Nat. Genet.">
        <title>Maintenance of genomic methylation requires a SWI2/SNF2-like protein.</title>
        <authorList>
            <person name="Jeddeloh J.A."/>
            <person name="Stokes T.L."/>
            <person name="Richards E.J."/>
        </authorList>
    </citation>
    <scope>NUCLEOTIDE SEQUENCE [GENOMIC DNA]</scope>
    <scope>FUNCTION</scope>
    <scope>DISRUPTION PHENOTYPE</scope>
    <source>
        <strain>cv. Columbia</strain>
    </source>
</reference>
<reference key="2">
    <citation type="journal article" date="2000" name="DNA Res.">
        <title>Structural analysis of Arabidopsis thaliana chromosome 5. X. Sequence features of the regions of 3,076,755 bp covered by sixty P1 and TAC clones.</title>
        <authorList>
            <person name="Sato S."/>
            <person name="Nakamura Y."/>
            <person name="Kaneko T."/>
            <person name="Katoh T."/>
            <person name="Asamizu E."/>
            <person name="Kotani H."/>
            <person name="Tabata S."/>
        </authorList>
    </citation>
    <scope>NUCLEOTIDE SEQUENCE [LARGE SCALE GENOMIC DNA]</scope>
    <source>
        <strain>cv. Columbia</strain>
    </source>
</reference>
<reference key="3">
    <citation type="journal article" date="2017" name="Plant J.">
        <title>Araport11: a complete reannotation of the Arabidopsis thaliana reference genome.</title>
        <authorList>
            <person name="Cheng C.Y."/>
            <person name="Krishnakumar V."/>
            <person name="Chan A.P."/>
            <person name="Thibaud-Nissen F."/>
            <person name="Schobel S."/>
            <person name="Town C.D."/>
        </authorList>
    </citation>
    <scope>GENOME REANNOTATION</scope>
    <source>
        <strain>cv. Columbia</strain>
    </source>
</reference>
<reference key="4">
    <citation type="journal article" date="2003" name="Science">
        <title>Empirical analysis of transcriptional activity in the Arabidopsis genome.</title>
        <authorList>
            <person name="Yamada K."/>
            <person name="Lim J."/>
            <person name="Dale J.M."/>
            <person name="Chen H."/>
            <person name="Shinn P."/>
            <person name="Palm C.J."/>
            <person name="Southwick A.M."/>
            <person name="Wu H.C."/>
            <person name="Kim C.J."/>
            <person name="Nguyen M."/>
            <person name="Pham P.K."/>
            <person name="Cheuk R.F."/>
            <person name="Karlin-Newmann G."/>
            <person name="Liu S.X."/>
            <person name="Lam B."/>
            <person name="Sakano H."/>
            <person name="Wu T."/>
            <person name="Yu G."/>
            <person name="Miranda M."/>
            <person name="Quach H.L."/>
            <person name="Tripp M."/>
            <person name="Chang C.H."/>
            <person name="Lee J.M."/>
            <person name="Toriumi M.J."/>
            <person name="Chan M.M."/>
            <person name="Tang C.C."/>
            <person name="Onodera C.S."/>
            <person name="Deng J.M."/>
            <person name="Akiyama K."/>
            <person name="Ansari Y."/>
            <person name="Arakawa T."/>
            <person name="Banh J."/>
            <person name="Banno F."/>
            <person name="Bowser L."/>
            <person name="Brooks S.Y."/>
            <person name="Carninci P."/>
            <person name="Chao Q."/>
            <person name="Choy N."/>
            <person name="Enju A."/>
            <person name="Goldsmith A.D."/>
            <person name="Gurjal M."/>
            <person name="Hansen N.F."/>
            <person name="Hayashizaki Y."/>
            <person name="Johnson-Hopson C."/>
            <person name="Hsuan V.W."/>
            <person name="Iida K."/>
            <person name="Karnes M."/>
            <person name="Khan S."/>
            <person name="Koesema E."/>
            <person name="Ishida J."/>
            <person name="Jiang P.X."/>
            <person name="Jones T."/>
            <person name="Kawai J."/>
            <person name="Kamiya A."/>
            <person name="Meyers C."/>
            <person name="Nakajima M."/>
            <person name="Narusaka M."/>
            <person name="Seki M."/>
            <person name="Sakurai T."/>
            <person name="Satou M."/>
            <person name="Tamse R."/>
            <person name="Vaysberg M."/>
            <person name="Wallender E.K."/>
            <person name="Wong C."/>
            <person name="Yamamura Y."/>
            <person name="Yuan S."/>
            <person name="Shinozaki K."/>
            <person name="Davis R.W."/>
            <person name="Theologis A."/>
            <person name="Ecker J.R."/>
        </authorList>
    </citation>
    <scope>NUCLEOTIDE SEQUENCE [LARGE SCALE MRNA]</scope>
    <source>
        <strain>cv. Columbia</strain>
    </source>
</reference>
<reference key="5">
    <citation type="journal article" date="2005" name="J. Biol. Chem.">
        <title>Transcript profiling in Arabidopsis reveals complex responses to global inhibition of DNA methylation and histone deacetylation.</title>
        <authorList>
            <person name="Chang S."/>
            <person name="Pikaard C.S."/>
        </authorList>
    </citation>
    <scope>NUCLEOTIDE SEQUENCE [GENOMIC DNA] OF 1-762</scope>
    <scope>FUNCTION</scope>
    <scope>DISRUPTION PHENOTYPE</scope>
    <source>
        <strain>cv. C24</strain>
    </source>
</reference>
<reference key="6">
    <citation type="journal article" date="1993" name="Science">
        <title>Arabidopsis thaliana DNA methylation mutants.</title>
        <authorList>
            <person name="Vongs A."/>
            <person name="Kakutani T."/>
            <person name="Martienssen R.A."/>
            <person name="Richards E.J."/>
        </authorList>
    </citation>
    <scope>FUNCTION</scope>
    <scope>DISRUPTION PHENOTYPE</scope>
</reference>
<reference key="7">
    <citation type="journal article" date="1995" name="Nucleic Acids Res.">
        <title>Characterization of an Arabidopsis thaliana DNA hypomethylation mutant.</title>
        <authorList>
            <person name="Kakutani T."/>
            <person name="Jeddeloh J.A."/>
            <person name="Richards E.J."/>
        </authorList>
    </citation>
    <scope>FUNCTION</scope>
    <scope>DISRUPTION PHENOTYPE</scope>
    <source>
        <strain>cv. Columbia</strain>
    </source>
</reference>
<reference key="8">
    <citation type="journal article" date="1996" name="Proc. Natl. Acad. Sci. U.S.A.">
        <title>Developmental abnormalities and epimutations associated with DNA hypomethylation mutations.</title>
        <authorList>
            <person name="Kakutani T."/>
            <person name="Jeddeloh J.A."/>
            <person name="Flowers S.K."/>
            <person name="Munakata K."/>
            <person name="Richards E.J."/>
        </authorList>
    </citation>
    <scope>FUNCTION</scope>
    <scope>DISRUPTION PHENOTYPE</scope>
    <source>
        <strain>cv. Columbia</strain>
    </source>
</reference>
<reference key="9">
    <citation type="journal article" date="1997" name="Plant J.">
        <title>Genetic characterization of late-flowering traits induced by DNA hypomethylation mutation in Arabidopsis thaliana.</title>
        <authorList>
            <person name="Kakutani T."/>
        </authorList>
    </citation>
    <scope>FUNCTION</scope>
    <scope>DISRUPTION PHENOTYPE</scope>
</reference>
<reference key="10">
    <citation type="journal article" date="1998" name="Genetics">
        <title>Gene silencing and homology-dependent gene silencing in Arabidopsis: genetic modifiers and DNA methylation.</title>
        <authorList>
            <person name="Furner I.J."/>
            <person name="Sheikh M.A."/>
            <person name="Collett C.E."/>
        </authorList>
    </citation>
    <scope>FUNCTION</scope>
    <scope>DISRUPTION PHENOTYPE</scope>
</reference>
<reference key="11">
    <citation type="journal article" date="1998" name="Genes Dev.">
        <title>The DNA methylation locus DDM1 is required for maintenance of gene silencing in Arabidopsis.</title>
        <authorList>
            <person name="Jeddeloh J.A."/>
            <person name="Bender J."/>
            <person name="Richards E.J."/>
        </authorList>
    </citation>
    <scope>FUNCTION</scope>
    <scope>DISRUPTION PHENOTYPE</scope>
</reference>
<reference key="12">
    <citation type="journal article" date="1998" name="Proc. Natl. Acad. Sci. U.S.A.">
        <title>Release of epigenetic gene silencing by trans-acting mutations in Arabidopsis.</title>
        <authorList>
            <person name="Mittelsten Scheid O."/>
            <person name="Afsar K."/>
            <person name="Paszkowski J."/>
        </authorList>
    </citation>
    <scope>FUNCTION</scope>
    <scope>DISRUPTION PHENOTYPE</scope>
</reference>
<reference key="13">
    <citation type="journal article" date="1999" name="Genetics">
        <title>Meiotically and mitotically stable inheritance of DNA hypomethylation induced by ddm1 mutation of Arabidopsis thaliana.</title>
        <authorList>
            <person name="Kakutani T."/>
            <person name="Munakata K."/>
            <person name="Richards E.J."/>
            <person name="Hirochika H."/>
        </authorList>
    </citation>
    <scope>FUNCTION</scope>
    <scope>DISRUPTION PHENOTYPE</scope>
</reference>
<reference key="14">
    <citation type="journal article" date="1999" name="Genes Dev.">
        <title>Maintenance of genomic imprinting at the Arabidopsis medea locus requires zygotic DDM1 activity.</title>
        <authorList>
            <person name="Vielle-Calzada J.-P."/>
            <person name="Thomas J."/>
            <person name="Spillane C."/>
            <person name="Coluccio A."/>
            <person name="Hoeppner M.A."/>
            <person name="Grossniklaus U."/>
        </authorList>
    </citation>
    <scope>FUNCTION</scope>
    <scope>DISRUPTION PHENOTYPE</scope>
</reference>
<reference key="15">
    <citation type="journal article" date="2000" name="Plant Cell">
        <title>Silencing of retrotransposons in arabidopsis and reactivation by the ddm1 mutation.</title>
        <authorList>
            <person name="Hirochika H."/>
            <person name="Okamoto H."/>
            <person name="Kakutani T."/>
        </authorList>
    </citation>
    <scope>FUNCTION</scope>
    <scope>DISRUPTION PHENOTYPE</scope>
</reference>
<reference key="16">
    <citation type="journal article" date="2000" name="Plant Cell">
        <title>Mutations in the FIE and MEA genes that encode interacting polycomb proteins cause parent-of-origin effects on seed development by distinct mechanisms.</title>
        <authorList>
            <person name="Yadegari R."/>
            <person name="Kinoshita T."/>
            <person name="Lotan O."/>
            <person name="Cohen G."/>
            <person name="Katz A."/>
            <person name="Choi Y."/>
            <person name="Katz A."/>
            <person name="Nakashima K."/>
            <person name="Harada J.J."/>
            <person name="Goldberg R.B."/>
            <person name="Fischer R.L."/>
            <person name="Ohad N."/>
        </authorList>
    </citation>
    <scope>FUNCTION</scope>
    <scope>DISRUPTION PHENOTYPE</scope>
</reference>
<reference key="17">
    <citation type="journal article" date="2000" name="Plant Mol. Biol.">
        <title>Plant DNA methyltransferases.</title>
        <authorList>
            <person name="Finnegan E.J."/>
            <person name="Kovac K.A."/>
        </authorList>
    </citation>
    <scope>REVIEW</scope>
</reference>
<reference key="18">
    <citation type="journal article" date="2001" name="Genes Dev.">
        <title>Robertson's Mutator transposons in A. thaliana are regulated by the chromatin-remodeling gene Decrease in DNA Methylation (DDM1).</title>
        <authorList>
            <person name="Singer T."/>
            <person name="Yordan C."/>
            <person name="Martienssen R.A."/>
        </authorList>
    </citation>
    <scope>FUNCTION</scope>
    <scope>DISRUPTION PHENOTYPE</scope>
    <source>
        <strain>cv. Columbia</strain>
    </source>
</reference>
<reference key="19">
    <citation type="journal article" date="2001" name="Nature">
        <title>Mobilization of transposons by a mutation abolishing full DNA methylation in Arabidopsis.</title>
        <authorList>
            <person name="Miura A."/>
            <person name="Yonebayashi S."/>
            <person name="Watanabe K."/>
            <person name="Toyama T."/>
            <person name="Shimada H."/>
            <person name="Kakutani T."/>
        </authorList>
    </citation>
    <scope>FUNCTION</scope>
    <scope>DISRUPTION PHENOTYPE</scope>
    <source>
        <strain>cv. Columbia</strain>
    </source>
</reference>
<reference key="20">
    <citation type="journal article" date="2002" name="Bioessays">
        <title>Helicase homologues maintain cytosine methylation in plants and mammals.</title>
        <authorList>
            <person name="Bourc'his D."/>
            <person name="Bestor T.H."/>
        </authorList>
    </citation>
    <scope>FUNCTION</scope>
</reference>
<reference key="21">
    <citation type="journal article" date="2002" name="Curr. Biol.">
        <title>Interplay between two epigenetic marks: DNA methylation and histone H3 lysine 9 methylation.</title>
        <authorList>
            <person name="Johnson L.M."/>
            <person name="Cao X."/>
            <person name="Jacobsen S.E."/>
        </authorList>
    </citation>
    <scope>FUNCTION</scope>
    <scope>DISRUPTION PHENOTYPE</scope>
</reference>
<reference key="22">
    <citation type="journal article" date="2002" name="EMBO J.">
        <title>DNA methylation controls histone H3 lysine 9 methylation and heterochromatin assembly in Arabidopsis.</title>
        <authorList>
            <person name="Soppe W.J.J."/>
            <person name="Jasencakova Z."/>
            <person name="Houben A."/>
            <person name="Kakutani T."/>
            <person name="Meister A."/>
            <person name="Huang M.S."/>
            <person name="Jacobsen S.E."/>
            <person name="Schubert I."/>
            <person name="Fransz P.F."/>
        </authorList>
    </citation>
    <scope>FUNCTION</scope>
    <scope>DISRUPTION PHENOTYPE</scope>
</reference>
<reference key="23">
    <citation type="journal article" date="2002" name="Genome Res.">
        <title>Athila4 of Arabidopsis and Calypso of soybean define a lineage of endogenous plant retroviruses.</title>
        <authorList>
            <person name="Wright D.A."/>
            <person name="Voytas D.F."/>
        </authorList>
    </citation>
    <scope>FUNCTION</scope>
    <scope>DISRUPTION PHENOTYPE</scope>
</reference>
<reference key="24">
    <citation type="journal article" date="2002" name="Plant J.">
        <title>Expression of Arabidopsis LINEs from two promoters.</title>
        <authorList>
            <person name="Ohta Y."/>
            <person name="Noma K."/>
            <person name="Tsuchimoto S."/>
            <person name="Ohtsubo E."/>
            <person name="Ohtsubo H."/>
        </authorList>
    </citation>
    <scope>FUNCTION</scope>
    <scope>DISRUPTION PHENOTYPE</scope>
</reference>
<reference key="25">
    <citation type="journal article" date="2002" name="Proc. Natl. Acad. Sci. U.S.A.">
        <title>Two regulatory levels of transcriptional gene silencing in Arabidopsis.</title>
        <authorList>
            <person name="Mittelsten Scheid O."/>
            <person name="Probst A.V."/>
            <person name="Afsar K."/>
            <person name="Paszkowski J."/>
        </authorList>
    </citation>
    <scope>FUNCTION</scope>
    <scope>DISRUPTION PHENOTYPE</scope>
</reference>
<reference key="26">
    <citation type="journal article" date="2002" name="Science">
        <title>Dependence of heterochromatic histone H3 methylation patterns on the Arabidopsis gene DDM1.</title>
        <authorList>
            <person name="Gendrel A.V."/>
            <person name="Lippman Z."/>
            <person name="Yordan C."/>
            <person name="Colot V."/>
            <person name="Martienssen R.A."/>
        </authorList>
    </citation>
    <scope>FUNCTION</scope>
    <scope>DISRUPTION PHENOTYPE</scope>
</reference>
<reference key="27">
    <citation type="journal article" date="2003" name="Genetics">
        <title>Arabidopsis MET1 cytosine methyltransferase mutants.</title>
        <authorList>
            <person name="Kankel M.W."/>
            <person name="Ramsey D.E."/>
            <person name="Stokes T.L."/>
            <person name="Flowers S.K."/>
            <person name="Haag J.R."/>
            <person name="Jeddeloh J.A."/>
            <person name="Riddle N.C."/>
            <person name="Verbsky M.L."/>
            <person name="Richards E.J."/>
        </authorList>
    </citation>
    <scope>FUNCTION</scope>
    <scope>DISRUPTION PHENOTYPE</scope>
</reference>
<reference key="28">
    <citation type="journal article" date="2003" name="J. Biol. Chem.">
        <title>Deficient in DNA methylation 1 (DDM1) defines a novel family of chromatin-remodeling factors.</title>
        <authorList>
            <person name="Brzeski J."/>
            <person name="Jerzmanowski A."/>
        </authorList>
    </citation>
    <scope>FUNCTION AS DNA HELICASE AND ATPASE</scope>
    <scope>DISRUPTION PHENOTYPE</scope>
    <scope>ACTIVITY REGULATION</scope>
    <scope>BIOPHYSICOCHEMICAL PROPERTIES</scope>
</reference>
<reference key="29">
    <citation type="journal article" date="2003" name="Plant Cell">
        <title>Changes in 5S rDNA chromatin organization and transcription during heterochromatin establishment in Arabidopsis.</title>
        <authorList>
            <person name="Mathieu O."/>
            <person name="Jasencakova Z."/>
            <person name="Vaillant I."/>
            <person name="Gendrel A.-V."/>
            <person name="Colot V."/>
            <person name="Schubert I."/>
            <person name="Tourmente S."/>
        </authorList>
    </citation>
    <scope>FUNCTION</scope>
    <scope>DISRUPTION PHENOTYPE</scope>
    <source>
        <strain>cv. Columbia</strain>
    </source>
</reference>
<reference key="30">
    <citation type="journal article" date="2003" name="Plant J.">
        <title>Two means of transcriptional reactivation within heterochromatin.</title>
        <authorList>
            <person name="Probst A.V."/>
            <person name="Fransz P.F."/>
            <person name="Paszkowski J."/>
            <person name="Mittelsten Scheid O."/>
        </authorList>
    </citation>
    <scope>FUNCTION</scope>
    <scope>DISRUPTION PHENOTYPE</scope>
</reference>
<reference key="31">
    <citation type="journal article" date="2003" name="PLoS Biol.">
        <title>Distinct mechanisms determine transposon inheritance and methylation via small interfering RNA and histone modification.</title>
        <authorList>
            <person name="Lippman Z."/>
            <person name="May B."/>
            <person name="Yordan C."/>
            <person name="Singer T."/>
            <person name="Martienssen R."/>
        </authorList>
    </citation>
    <scope>FUNCTION IN TRANSPOSON SILENCING</scope>
    <scope>DISRUPTION PHENOTYPE</scope>
    <source>
        <strain>cv. Landsberg erecta</strain>
    </source>
</reference>
<reference key="32">
    <citation type="journal article" date="2003" name="Trends Plant Sci.">
        <title>DNA-RNA-protein gang together in silence.</title>
        <authorList>
            <person name="Stokes T."/>
        </authorList>
    </citation>
    <scope>REVIEW</scope>
</reference>
<reference key="33">
    <citation type="journal article" date="2004" name="Genetics">
        <title>Epigenetic control of CACTA transposon mobility in Arabidopsis thaliana.</title>
        <authorList>
            <person name="Kato M."/>
            <person name="Takashima K."/>
            <person name="Kakutani T."/>
        </authorList>
    </citation>
    <scope>FUNCTION IN TRANSPOSON SILENCING</scope>
    <scope>DISRUPTION PHENOTYPE</scope>
</reference>
<reference key="34">
    <citation type="journal article" date="2004" name="Mol. Genet. Genomics">
        <title>Genomic localization of endogenous mobile CACTA family transposons in natural variants of Arabidopsis thaliana.</title>
        <authorList>
            <person name="Miura A."/>
            <person name="Kato M."/>
            <person name="Watanabe K."/>
            <person name="Kawabe A."/>
            <person name="Kotani H."/>
            <person name="Kakutani T."/>
        </authorList>
    </citation>
    <scope>FUNCTION IN TRANSPOSON SILENCING</scope>
    <scope>DISRUPTION PHENOTYPE</scope>
</reference>
<reference key="35">
    <citation type="journal article" date="2004" name="Nature">
        <title>Role of transposable elements in heterochromatin and epigenetic control.</title>
        <authorList>
            <person name="Lippman Z."/>
            <person name="Gendrel A.-V."/>
            <person name="Black M."/>
            <person name="Vaughn M.W."/>
            <person name="Dedhia N."/>
            <person name="McCombie W.R."/>
            <person name="Lavine K."/>
            <person name="Mittal V."/>
            <person name="May B."/>
            <person name="Kasschau K.D."/>
            <person name="Carrington J.C."/>
            <person name="Doerge R.W."/>
            <person name="Colot V."/>
            <person name="Martienssen R."/>
        </authorList>
    </citation>
    <scope>FUNCTION IN TRANSPOSON SILENCING</scope>
    <scope>DISRUPTION PHENOTYPE</scope>
</reference>
<reference key="36">
    <citation type="journal article" date="2005" name="Planta">
        <title>DNA methylation increases throughout Arabidopsis development.</title>
        <authorList>
            <person name="Ruiz-Garcia L."/>
            <person name="Cervera M.T."/>
            <person name="Martinez-Zapater J.M."/>
        </authorList>
    </citation>
    <scope>FUNCTION</scope>
    <scope>DISRUPTION PHENOTYPE</scope>
    <source>
        <strain>cv. Columbia</strain>
    </source>
</reference>
<reference key="37">
    <citation type="journal article" date="2005" name="Plant Cell">
        <title>DDM1 binds Arabidopsis methyl-CpG binding domain proteins and affects their subnuclear localization.</title>
        <authorList>
            <person name="Zemach A."/>
            <person name="Li Y."/>
            <person name="Wayburn B."/>
            <person name="Ben-Meir H."/>
            <person name="Kiss V."/>
            <person name="Avivi Y."/>
            <person name="Kalchenko V."/>
            <person name="Jacobsen S.E."/>
            <person name="Grafi G."/>
        </authorList>
    </citation>
    <scope>FUNCTION</scope>
    <scope>DISRUPTION PHENOTYPE</scope>
    <scope>INTERACTION WITH MBD2; MBD5 AND MBD6</scope>
</reference>
<reference key="38">
    <citation type="journal article" date="2006" name="EMBO Rep.">
        <title>Epigenetic regulation of transcription in intermediate heterochromatin.</title>
        <authorList>
            <person name="Habu Y."/>
            <person name="Mathieu O."/>
            <person name="Tariq M."/>
            <person name="Probst A.V."/>
            <person name="Smathajitt C."/>
            <person name="Zhu T."/>
            <person name="Paszkowski J."/>
        </authorList>
    </citation>
    <scope>FUNCTION</scope>
    <scope>DISRUPTION PHENOTYPE</scope>
</reference>
<reference key="39">
    <citation type="journal article" date="2006" name="Genetics">
        <title>Involvement of the Arabidopsis SWI2/SNF2 chromatin remodeling gene family in DNA damage response and recombination.</title>
        <authorList>
            <person name="Shaked H."/>
            <person name="Avivi-Ragolsky N."/>
            <person name="Levy A.A."/>
        </authorList>
    </citation>
    <scope>GENE FAMILY</scope>
    <scope>NOMENCLATURE</scope>
</reference>
<reference key="40">
    <citation type="journal article" date="2006" name="Plant Physiol.">
        <title>Regulation of seed size by hypomethylation of maternal and paternal genomes.</title>
        <authorList>
            <person name="Xiao W."/>
            <person name="Brown R.C."/>
            <person name="Lemmon B.E."/>
            <person name="Harada J.J."/>
            <person name="Goldberg R.B."/>
            <person name="Fischer R.L."/>
        </authorList>
    </citation>
    <scope>FUNCTION</scope>
    <scope>DISRUPTION PHENOTYPE</scope>
</reference>
<reference key="41">
    <citation type="journal article" date="2007" name="EMBO J.">
        <title>Heritable epigenetic mutation of a transposon-flanked Arabidopsis gene due to lack of the chromatin-remodeling factor DDM1.</title>
        <authorList>
            <person name="Saze H."/>
            <person name="Kakutani T."/>
        </authorList>
    </citation>
    <scope>FUNCTION</scope>
    <scope>DISRUPTION PHENOTYPE</scope>
</reference>
<reference key="42">
    <citation type="journal article" date="2007" name="Genetics">
        <title>Differential epigenetic regulation within an Arabidopsis retroposon family.</title>
        <authorList>
            <person name="Rangwala S.H."/>
            <person name="Richards E.J."/>
        </authorList>
    </citation>
    <scope>FUNCTION IN TRANSPOSON SILENCING</scope>
    <scope>DISRUPTION PHENOTYPE</scope>
</reference>
<reference key="43">
    <citation type="journal article" date="2007" name="Plant J.">
        <title>Control of FWA gene silencing in Arabidopsis thaliana by SINE-related direct repeats.</title>
        <authorList>
            <person name="Kinoshita Y."/>
            <person name="Saze H."/>
            <person name="Kinoshita T."/>
            <person name="Miura A."/>
            <person name="Soppe W.J.J."/>
            <person name="Koornneef M."/>
            <person name="Kakutani T."/>
        </authorList>
    </citation>
    <scope>FUNCTION</scope>
    <scope>DISRUPTION PHENOTYPE</scope>
</reference>
<reference key="44">
    <citation type="journal article" date="2008" name="Plant Physiol.">
        <title>Invasion of the Arabidopsis genome by the tobacco retrotransposon Tnt1 is controlled by reversible transcriptional gene silencing.</title>
        <authorList>
            <person name="Perez-Hormaeche J."/>
            <person name="Potet F."/>
            <person name="Beauclair L."/>
            <person name="Le Masson I."/>
            <person name="Courtial B."/>
            <person name="Bouche N."/>
            <person name="Lucas H."/>
        </authorList>
    </citation>
    <scope>FUNCTION IN TRANSPOSON SILENCING</scope>
    <scope>DISRUPTION PHENOTYPE</scope>
</reference>
<reference key="45">
    <citation type="journal article" date="2009" name="PLoS ONE">
        <title>Heterochromatic siRNAs and DDM1 independently silence aberrant 5S rDNA transcripts in Arabidopsis.</title>
        <authorList>
            <person name="Blevins T."/>
            <person name="Pontes O."/>
            <person name="Pikaard C.S."/>
            <person name="Meins F. Jr."/>
        </authorList>
    </citation>
    <scope>FUNCTION</scope>
    <scope>DISRUPTION PHENOTYPE</scope>
</reference>
<reference key="46">
    <citation type="journal article" date="2013" name="PLoS ONE">
        <title>Genome-wide comparative in silico analysis of the RNA helicase gene family in Zea mays and Glycine max: a comparison with Arabidopsis and Oryza sativa.</title>
        <authorList>
            <person name="Xu R."/>
            <person name="Zhang S."/>
            <person name="Huang J."/>
            <person name="Zheng C."/>
        </authorList>
    </citation>
    <scope>GENE FAMILY</scope>
</reference>
<dbReference type="EC" id="3.6.4.12"/>
<dbReference type="EMBL" id="AF143940">
    <property type="protein sequence ID" value="AAD28303.1"/>
    <property type="molecule type" value="Genomic_DNA"/>
</dbReference>
<dbReference type="EMBL" id="AB018119">
    <property type="protein sequence ID" value="BAA97281.1"/>
    <property type="molecule type" value="Genomic_DNA"/>
</dbReference>
<dbReference type="EMBL" id="CP002688">
    <property type="protein sequence ID" value="AED98259.1"/>
    <property type="molecule type" value="Genomic_DNA"/>
</dbReference>
<dbReference type="EMBL" id="AY099638">
    <property type="protein sequence ID" value="AAM20489.1"/>
    <property type="molecule type" value="mRNA"/>
</dbReference>
<dbReference type="EMBL" id="BT002161">
    <property type="protein sequence ID" value="AAN72172.1"/>
    <property type="molecule type" value="mRNA"/>
</dbReference>
<dbReference type="EMBL" id="AY699010">
    <property type="protein sequence ID" value="AAX22754.1"/>
    <property type="status" value="ALT_SEQ"/>
    <property type="molecule type" value="Genomic_DNA"/>
</dbReference>
<dbReference type="EMBL" id="AY699011">
    <property type="protein sequence ID" value="AAX22755.1"/>
    <property type="status" value="ALT_SEQ"/>
    <property type="molecule type" value="Genomic_DNA"/>
</dbReference>
<dbReference type="RefSeq" id="NP_201476.1">
    <property type="nucleotide sequence ID" value="NM_126073.3"/>
</dbReference>
<dbReference type="PDB" id="7UX9">
    <property type="method" value="EM"/>
    <property type="resolution" value="3.20 A"/>
    <property type="chains" value="P=1-764"/>
</dbReference>
<dbReference type="PDB" id="8J90">
    <property type="method" value="EM"/>
    <property type="resolution" value="4.71 A"/>
    <property type="chains" value="K=1-764"/>
</dbReference>
<dbReference type="PDB" id="8KCB">
    <property type="method" value="EM"/>
    <property type="resolution" value="3.17 A"/>
    <property type="chains" value="K=1-764"/>
</dbReference>
<dbReference type="PDB" id="8KCC">
    <property type="method" value="EM"/>
    <property type="resolution" value="3.10 A"/>
    <property type="chains" value="K=1-764"/>
</dbReference>
<dbReference type="PDB" id="8SKZ">
    <property type="method" value="EM"/>
    <property type="resolution" value="3.50 A"/>
    <property type="chains" value="A=1-764"/>
</dbReference>
<dbReference type="PDB" id="8WH5">
    <property type="method" value="EM"/>
    <property type="resolution" value="3.58 A"/>
    <property type="chains" value="K=1-764"/>
</dbReference>
<dbReference type="PDB" id="8WH8">
    <property type="method" value="EM"/>
    <property type="resolution" value="3.60 A"/>
    <property type="chains" value="K=1-764"/>
</dbReference>
<dbReference type="PDB" id="8WH9">
    <property type="method" value="EM"/>
    <property type="resolution" value="3.31 A"/>
    <property type="chains" value="K=1-764"/>
</dbReference>
<dbReference type="PDB" id="8WHA">
    <property type="method" value="EM"/>
    <property type="resolution" value="4.05 A"/>
    <property type="chains" value="K/L=1-764"/>
</dbReference>
<dbReference type="PDBsum" id="7UX9"/>
<dbReference type="PDBsum" id="8J90"/>
<dbReference type="PDBsum" id="8KCB"/>
<dbReference type="PDBsum" id="8KCC"/>
<dbReference type="PDBsum" id="8SKZ"/>
<dbReference type="PDBsum" id="8WH5"/>
<dbReference type="PDBsum" id="8WH8"/>
<dbReference type="PDBsum" id="8WH9"/>
<dbReference type="PDBsum" id="8WHA"/>
<dbReference type="EMDB" id="EMD-26855"/>
<dbReference type="EMDB" id="EMD-36083"/>
<dbReference type="EMDB" id="EMD-37098"/>
<dbReference type="EMDB" id="EMD-37099"/>
<dbReference type="EMDB" id="EMD-37529"/>
<dbReference type="EMDB" id="EMD-37533"/>
<dbReference type="EMDB" id="EMD-37535"/>
<dbReference type="EMDB" id="EMD-37537"/>
<dbReference type="EMDB" id="EMD-40569"/>
<dbReference type="SMR" id="Q9XFH4"/>
<dbReference type="BioGRID" id="22050">
    <property type="interactions" value="4"/>
</dbReference>
<dbReference type="FunCoup" id="Q9XFH4">
    <property type="interactions" value="1166"/>
</dbReference>
<dbReference type="IntAct" id="Q9XFH4">
    <property type="interactions" value="2"/>
</dbReference>
<dbReference type="STRING" id="3702.Q9XFH4"/>
<dbReference type="iPTMnet" id="Q9XFH4"/>
<dbReference type="PaxDb" id="3702-AT5G66750.1"/>
<dbReference type="ProteomicsDB" id="224563"/>
<dbReference type="EnsemblPlants" id="AT5G66750.1">
    <property type="protein sequence ID" value="AT5G66750.1"/>
    <property type="gene ID" value="AT5G66750"/>
</dbReference>
<dbReference type="GeneID" id="836808"/>
<dbReference type="Gramene" id="AT5G66750.1">
    <property type="protein sequence ID" value="AT5G66750.1"/>
    <property type="gene ID" value="AT5G66750"/>
</dbReference>
<dbReference type="KEGG" id="ath:AT5G66750"/>
<dbReference type="Araport" id="AT5G66750"/>
<dbReference type="TAIR" id="AT5G66750">
    <property type="gene designation" value="CHR1"/>
</dbReference>
<dbReference type="eggNOG" id="KOG0385">
    <property type="taxonomic scope" value="Eukaryota"/>
</dbReference>
<dbReference type="HOGENOM" id="CLU_000315_17_1_1"/>
<dbReference type="InParanoid" id="Q9XFH4"/>
<dbReference type="OMA" id="WNICRID"/>
<dbReference type="PhylomeDB" id="Q9XFH4"/>
<dbReference type="PRO" id="PR:Q9XFH4"/>
<dbReference type="Proteomes" id="UP000006548">
    <property type="component" value="Chromosome 5"/>
</dbReference>
<dbReference type="ExpressionAtlas" id="Q9XFH4">
    <property type="expression patterns" value="baseline and differential"/>
</dbReference>
<dbReference type="GO" id="GO:0000786">
    <property type="term" value="C:nucleosome"/>
    <property type="evidence" value="ECO:0000314"/>
    <property type="project" value="TAIR"/>
</dbReference>
<dbReference type="GO" id="GO:0005634">
    <property type="term" value="C:nucleus"/>
    <property type="evidence" value="ECO:0007669"/>
    <property type="project" value="UniProtKB-SubCell"/>
</dbReference>
<dbReference type="GO" id="GO:0005524">
    <property type="term" value="F:ATP binding"/>
    <property type="evidence" value="ECO:0007669"/>
    <property type="project" value="UniProtKB-KW"/>
</dbReference>
<dbReference type="GO" id="GO:0016887">
    <property type="term" value="F:ATP hydrolysis activity"/>
    <property type="evidence" value="ECO:0000314"/>
    <property type="project" value="TAIR"/>
</dbReference>
<dbReference type="GO" id="GO:0003677">
    <property type="term" value="F:DNA binding"/>
    <property type="evidence" value="ECO:0007669"/>
    <property type="project" value="UniProtKB-KW"/>
</dbReference>
<dbReference type="GO" id="GO:0003678">
    <property type="term" value="F:DNA helicase activity"/>
    <property type="evidence" value="ECO:0000315"/>
    <property type="project" value="UniProtKB"/>
</dbReference>
<dbReference type="GO" id="GO:0006338">
    <property type="term" value="P:chromatin remodeling"/>
    <property type="evidence" value="ECO:0000315"/>
    <property type="project" value="UniProtKB"/>
</dbReference>
<dbReference type="GO" id="GO:0006346">
    <property type="term" value="P:DNA methylation-dependent constitutive heterochromatin formation"/>
    <property type="evidence" value="ECO:0000315"/>
    <property type="project" value="TAIR"/>
</dbReference>
<dbReference type="GO" id="GO:0009294">
    <property type="term" value="P:DNA-mediated transformation"/>
    <property type="evidence" value="ECO:0000315"/>
    <property type="project" value="TAIR"/>
</dbReference>
<dbReference type="GO" id="GO:0040029">
    <property type="term" value="P:epigenetic regulation of gene expression"/>
    <property type="evidence" value="ECO:0000315"/>
    <property type="project" value="GO_Central"/>
</dbReference>
<dbReference type="GO" id="GO:0031507">
    <property type="term" value="P:heterochromatin formation"/>
    <property type="evidence" value="ECO:0000315"/>
    <property type="project" value="UniProtKB"/>
</dbReference>
<dbReference type="GO" id="GO:0032197">
    <property type="term" value="P:retrotransposition"/>
    <property type="evidence" value="ECO:0000315"/>
    <property type="project" value="TAIR"/>
</dbReference>
<dbReference type="CDD" id="cd18009">
    <property type="entry name" value="DEXHc_HELLS_SMARCA6"/>
    <property type="match status" value="1"/>
</dbReference>
<dbReference type="CDD" id="cd18793">
    <property type="entry name" value="SF2_C_SNF"/>
    <property type="match status" value="1"/>
</dbReference>
<dbReference type="FunFam" id="3.40.50.10810:FF:000030">
    <property type="entry name" value="ATP-dependent DNA helicase DDM1"/>
    <property type="match status" value="1"/>
</dbReference>
<dbReference type="FunFam" id="3.40.50.300:FF:001184">
    <property type="entry name" value="Chromatin complex subunit A 106"/>
    <property type="match status" value="1"/>
</dbReference>
<dbReference type="Gene3D" id="3.40.50.300">
    <property type="entry name" value="P-loop containing nucleotide triphosphate hydrolases"/>
    <property type="match status" value="1"/>
</dbReference>
<dbReference type="Gene3D" id="3.40.50.10810">
    <property type="entry name" value="Tandem AAA-ATPase domain"/>
    <property type="match status" value="1"/>
</dbReference>
<dbReference type="InterPro" id="IPR014001">
    <property type="entry name" value="Helicase_ATP-bd"/>
</dbReference>
<dbReference type="InterPro" id="IPR001650">
    <property type="entry name" value="Helicase_C-like"/>
</dbReference>
<dbReference type="InterPro" id="IPR044753">
    <property type="entry name" value="HELLS_N"/>
</dbReference>
<dbReference type="InterPro" id="IPR027417">
    <property type="entry name" value="P-loop_NTPase"/>
</dbReference>
<dbReference type="InterPro" id="IPR038718">
    <property type="entry name" value="SNF2-like_sf"/>
</dbReference>
<dbReference type="InterPro" id="IPR049730">
    <property type="entry name" value="SNF2/RAD54-like_C"/>
</dbReference>
<dbReference type="InterPro" id="IPR000330">
    <property type="entry name" value="SNF2_N"/>
</dbReference>
<dbReference type="PANTHER" id="PTHR10799">
    <property type="entry name" value="SNF2/RAD54 HELICASE FAMILY"/>
    <property type="match status" value="1"/>
</dbReference>
<dbReference type="Pfam" id="PF00271">
    <property type="entry name" value="Helicase_C"/>
    <property type="match status" value="1"/>
</dbReference>
<dbReference type="Pfam" id="PF00176">
    <property type="entry name" value="SNF2-rel_dom"/>
    <property type="match status" value="1"/>
</dbReference>
<dbReference type="SMART" id="SM00487">
    <property type="entry name" value="DEXDc"/>
    <property type="match status" value="1"/>
</dbReference>
<dbReference type="SMART" id="SM00490">
    <property type="entry name" value="HELICc"/>
    <property type="match status" value="1"/>
</dbReference>
<dbReference type="SUPFAM" id="SSF52540">
    <property type="entry name" value="P-loop containing nucleoside triphosphate hydrolases"/>
    <property type="match status" value="2"/>
</dbReference>
<dbReference type="PROSITE" id="PS51192">
    <property type="entry name" value="HELICASE_ATP_BIND_1"/>
    <property type="match status" value="1"/>
</dbReference>
<dbReference type="PROSITE" id="PS51194">
    <property type="entry name" value="HELICASE_CTER"/>
    <property type="match status" value="1"/>
</dbReference>
<gene>
    <name type="primary">DDM1</name>
    <name type="synonym">CHA1</name>
    <name evidence="46" type="synonym">CHR1</name>
    <name type="synonym">SOM1</name>
    <name type="synonym">SOM4</name>
    <name type="ordered locus">At5g66750</name>
    <name type="ORF">MSN2.14</name>
</gene>
<comment type="function">
    <text evidence="7 8 9 10 11 12 13 14 15 16 17 18 19 20 21 22 23 24 25 26 27 28 29 30 31 32 33 34 35 36 37 38 39 40 41 42 43 44 45">ATP-dependent DNA helicase that plays a role in formation, organization, stability and heritability of heterochromatin and thus regulates several physiological traits. Binds to the nucleosome and promotes chromatin remodeling in an ATP-dependent manner; induces nucleosome repositioning on a short DNA fragment, and, possibly, could be guided to target sites (including silent transposable elements) by small interfering RNAs (siRNAs). Can bind both free and nucleosomal DNA. Required for the heritable maintenance of genome integrity and transcriptional gene silencing (TGS), including homology-dependent gene silencing (HDG silencing), via the maintenance of DNA methylation (mostly on cytosine, in both CpG and CpHpG sites, where H is A, T or C) and of histone methylation (e.g. chromatin methylation). May facilitate localization of MBD proteins at specific nuclear domains. Necessary for the maintenance of the genomic imprint at the MEA locus, especially for the silencing of paternally inherited MEA locus. Plays a major role in the inactivation maintenance of retrotransposons (e.g. Tar17, SINE, LINE, ATLN39, CAC1 (CACTAs), Athila elements, and mutator-like elements MULEs and TIR-MULEs) and the silencing of repeated genes and transgenes (e.g. T-DNA insertions). Required for KYP-dependent histone H3 'Lys-9' (H3K9me) methylation, deacetylation of histone H4 'Lys-16' (H4K16) and MET1-dependent DNA methylation. Involved in the chromatin organization of 5S rRNA genes (localized in the pericentromeric heterochromatin of chromosomes 3, 4, and 5) modifications during heterochromatin establishment. Prevents siRNA accumulation (siRNA are probably involved in epigenetic inheritance and in 5S rRNA genes regulation by silencing). Required during plant organogenesis and development, as well as during seed formation.</text>
</comment>
<comment type="catalytic activity">
    <reaction>
        <text>ATP + H2O = ADP + phosphate + H(+)</text>
        <dbReference type="Rhea" id="RHEA:13065"/>
        <dbReference type="ChEBI" id="CHEBI:15377"/>
        <dbReference type="ChEBI" id="CHEBI:15378"/>
        <dbReference type="ChEBI" id="CHEBI:30616"/>
        <dbReference type="ChEBI" id="CHEBI:43474"/>
        <dbReference type="ChEBI" id="CHEBI:456216"/>
        <dbReference type="EC" id="3.6.4.12"/>
    </reaction>
</comment>
<comment type="activity regulation">
    <text evidence="19">ATPase activity is stimulated 3-fold by DNA (both free and nucleosomal) binding.</text>
</comment>
<comment type="biophysicochemical properties">
    <kinetics>
        <KM evidence="19">55 uM for ATP</KM>
        <KM evidence="19">66 uM for ATP (in the presence of free DNA)</KM>
        <KM evidence="19">66 uM for ATP (in the presence of chromatin)</KM>
        <text>All results where obtained at pH 8.0 and 25 degrees Celsius.</text>
    </kinetics>
</comment>
<comment type="subunit">
    <text evidence="30">Interacts with the MBD domains of MBD2, MBD5 and MBD6.</text>
</comment>
<comment type="subcellular location">
    <subcellularLocation>
        <location evidence="1 5">Nucleus</location>
    </subcellularLocation>
    <text evidence="1">Closely associated with pericentric heterochromatin.</text>
</comment>
<comment type="disruption phenotype">
    <text evidence="7 8 9 10 11 12 13 14 16 17 18 19 20 21 22 23 24 25 26 27 28 29 30 31 32 33 34 35 36 37 38 39 40 41 42 43 44 45">Reactivated transcription of heavily methylated silent loci, via chromatin demethylation. Hypomethylated chromatin; gain of histone H3 'Lys-4' methylation (H3K4me) but depletion of histone H3 'Lys-9' methylation (H3K9me). Altered leaf shape, increased cauline leaf number, and delayed flowering onset (due to FWA derepression). Accumulates developmental abnormalities and transcription derepression by slowly inducing heritable lesions (hopymethylation) at unlinked loci. Derepressed paternally inherited MEA locus in male gametophytes and seeds. Reactivation of several silent retrotransposons. Smaller chromocenters with reduced heterochromatin amount. Causes a striking decondensation of centromeric heterochromatin, a redistribution of the remaining methylation of DNA, and a drastic change in the pattern of histone modification. Abnormal subcellular localization of MBD proteins (e.g. MBD2, MBD5, MBD6 and MBD7). Smaller seeds in male inherited disruption, but larger seeds in female inherited ones. The heritable and cumulative hypermethylation and silencing of BNS, leading to the bonsai phenotype, requires the hypomethylation of the flanking LINE transposon.</text>
</comment>
<comment type="similarity">
    <text evidence="47">Belongs to the SNF2/RAD54 helicase family.</text>
</comment>
<comment type="sequence caution" evidence="47">
    <conflict type="erroneous gene model prediction">
        <sequence resource="EMBL-CDS" id="AAX22754"/>
    </conflict>
</comment>
<comment type="sequence caution" evidence="47">
    <conflict type="erroneous gene model prediction">
        <sequence resource="EMBL-CDS" id="AAX22755"/>
    </conflict>
</comment>
<keyword id="KW-0002">3D-structure</keyword>
<keyword id="KW-0067">ATP-binding</keyword>
<keyword id="KW-0175">Coiled coil</keyword>
<keyword id="KW-0238">DNA-binding</keyword>
<keyword id="KW-0347">Helicase</keyword>
<keyword id="KW-0378">Hydrolase</keyword>
<keyword id="KW-0547">Nucleotide-binding</keyword>
<keyword id="KW-0539">Nucleus</keyword>
<keyword id="KW-1185">Reference proteome</keyword>
<keyword id="KW-0677">Repeat</keyword>
<keyword id="KW-0804">Transcription</keyword>
<keyword id="KW-0805">Transcription regulation</keyword>
<evidence type="ECO:0000250" key="1"/>
<evidence type="ECO:0000255" key="2"/>
<evidence type="ECO:0000255" key="3">
    <source>
        <dbReference type="PROSITE-ProRule" id="PRU00541"/>
    </source>
</evidence>
<evidence type="ECO:0000255" key="4">
    <source>
        <dbReference type="PROSITE-ProRule" id="PRU00542"/>
    </source>
</evidence>
<evidence type="ECO:0000255" key="5">
    <source>
        <dbReference type="PROSITE-ProRule" id="PRU00768"/>
    </source>
</evidence>
<evidence type="ECO:0000256" key="6">
    <source>
        <dbReference type="SAM" id="MobiDB-lite"/>
    </source>
</evidence>
<evidence type="ECO:0000269" key="7">
    <source>
    </source>
</evidence>
<evidence type="ECO:0000269" key="8">
    <source>
    </source>
</evidence>
<evidence type="ECO:0000269" key="9">
    <source>
    </source>
</evidence>
<evidence type="ECO:0000269" key="10">
    <source>
    </source>
</evidence>
<evidence type="ECO:0000269" key="11">
    <source>
    </source>
</evidence>
<evidence type="ECO:0000269" key="12">
    <source>
    </source>
</evidence>
<evidence type="ECO:0000269" key="13">
    <source>
    </source>
</evidence>
<evidence type="ECO:0000269" key="14">
    <source>
    </source>
</evidence>
<evidence type="ECO:0000269" key="15">
    <source>
    </source>
</evidence>
<evidence type="ECO:0000269" key="16">
    <source>
    </source>
</evidence>
<evidence type="ECO:0000269" key="17">
    <source>
    </source>
</evidence>
<evidence type="ECO:0000269" key="18">
    <source>
    </source>
</evidence>
<evidence type="ECO:0000269" key="19">
    <source>
    </source>
</evidence>
<evidence type="ECO:0000269" key="20">
    <source>
    </source>
</evidence>
<evidence type="ECO:0000269" key="21">
    <source>
    </source>
</evidence>
<evidence type="ECO:0000269" key="22">
    <source>
    </source>
</evidence>
<evidence type="ECO:0000269" key="23">
    <source>
    </source>
</evidence>
<evidence type="ECO:0000269" key="24">
    <source>
    </source>
</evidence>
<evidence type="ECO:0000269" key="25">
    <source>
    </source>
</evidence>
<evidence type="ECO:0000269" key="26">
    <source>
    </source>
</evidence>
<evidence type="ECO:0000269" key="27">
    <source>
    </source>
</evidence>
<evidence type="ECO:0000269" key="28">
    <source>
    </source>
</evidence>
<evidence type="ECO:0000269" key="29">
    <source>
    </source>
</evidence>
<evidence type="ECO:0000269" key="30">
    <source>
    </source>
</evidence>
<evidence type="ECO:0000269" key="31">
    <source>
    </source>
</evidence>
<evidence type="ECO:0000269" key="32">
    <source>
    </source>
</evidence>
<evidence type="ECO:0000269" key="33">
    <source>
    </source>
</evidence>
<evidence type="ECO:0000269" key="34">
    <source>
    </source>
</evidence>
<evidence type="ECO:0000269" key="35">
    <source>
    </source>
</evidence>
<evidence type="ECO:0000269" key="36">
    <source>
    </source>
</evidence>
<evidence type="ECO:0000269" key="37">
    <source>
    </source>
</evidence>
<evidence type="ECO:0000269" key="38">
    <source>
    </source>
</evidence>
<evidence type="ECO:0000269" key="39">
    <source>
    </source>
</evidence>
<evidence type="ECO:0000269" key="40">
    <source>
    </source>
</evidence>
<evidence type="ECO:0000269" key="41">
    <source>
    </source>
</evidence>
<evidence type="ECO:0000269" key="42">
    <source>
    </source>
</evidence>
<evidence type="ECO:0000269" key="43">
    <source>
    </source>
</evidence>
<evidence type="ECO:0000269" key="44">
    <source>
    </source>
</evidence>
<evidence type="ECO:0000269" key="45">
    <source>
    </source>
</evidence>
<evidence type="ECO:0000303" key="46">
    <source>
    </source>
</evidence>
<evidence type="ECO:0000305" key="47"/>
<evidence type="ECO:0007829" key="48">
    <source>
        <dbReference type="PDB" id="7UX9"/>
    </source>
</evidence>
<evidence type="ECO:0007829" key="49">
    <source>
        <dbReference type="PDB" id="8KCB"/>
    </source>
</evidence>
<evidence type="ECO:0007829" key="50">
    <source>
        <dbReference type="PDB" id="8KCC"/>
    </source>
</evidence>
<evidence type="ECO:0007829" key="51">
    <source>
        <dbReference type="PDB" id="8SKZ"/>
    </source>
</evidence>
<accession>Q9XFH4</accession>
<accession>Q5C995</accession>
<accession>Q5C996</accession>
<name>DDM1_ARATH</name>
<sequence>MVSLRSRKVIPASEMVSDGKTEKDASGDSPTSVLNEEENCEEKSVTVVEEEILLAKNGDSSLISEAMAQEEEQLLKLREDEEKANNAGSAVAPNLNETQFTKLDELLTQTQLYSEFLLEKMEDITINGIESESQKAEPEKTGRGRKRKAASQYNNTKAKRAVAAMISRSKEDGETINSDLTEEETVIKLQNELCPLLTGGQLKSYQLKGVKWLISLWQNGLNGILADQMGLGKTIQTIGFLSHLKGNGLDGPYLVIAPLSTLSNWFNEIARFTPSINAIIYHGDKNQRDELRRKHMPKTVGPKFPIVITSYEVAMNDAKRILRHYPWKYVVIDEGHRLKNHKCKLLRELKHLKMDNKLLLTGTPLQNNLSELWSLLNFILPDIFTSHDEFESWFDFSEKNKNEATKEEEEKRRAQVVSKLHGILRPFILRRMKCDVELSLPRKKEIIMYATMTDHQKKFQEHLVNNTLEAHLGENAIRGQGWKGKLNNLVIQLRKNCNHPDLLQGQIDGSYLYPPVEEIVGQCGKFRLLERLLVRLFANNHKVLIFSQWTKLLDIMDYYFSEKGFEVCRIDGSVKLDERRRQIKDFSDEKSSCSIFLLSTRAGGLGINLTAADTCILYDSDWNPQMDLQAMDRCHRIGQTKPVHVYRLSTAQSIETRVLKRAYSKLKLEHVVIGQGQFHQERAKSSTPLEEEDILALLKEDETAEDKLIQTDISDADLDRLLDRSDLTITAPGETQAAEAFPVKGPGWEVVLPSSGGMLSSLNS</sequence>
<protein>
    <recommendedName>
        <fullName>ATP-dependent DNA helicase DDM1</fullName>
        <ecNumber>3.6.4.12</ecNumber>
    </recommendedName>
    <alternativeName>
        <fullName evidence="46">Protein CHROMATIN REMODELING 1</fullName>
        <shortName>AtCHR1</shortName>
        <shortName>CHR01</shortName>
    </alternativeName>
    <alternativeName>
        <fullName>Protein DECREASED DNA METHYLATION 1</fullName>
        <shortName>AtDDM1</shortName>
    </alternativeName>
    <alternativeName>
        <fullName>Protein SOMNIFEROUS 1</fullName>
    </alternativeName>
    <alternativeName>
        <fullName>SWI/SNF2-related matrix-associated actin-dependent regulator of chromatin DDM1</fullName>
    </alternativeName>
</protein>
<organism>
    <name type="scientific">Arabidopsis thaliana</name>
    <name type="common">Mouse-ear cress</name>
    <dbReference type="NCBI Taxonomy" id="3702"/>
    <lineage>
        <taxon>Eukaryota</taxon>
        <taxon>Viridiplantae</taxon>
        <taxon>Streptophyta</taxon>
        <taxon>Embryophyta</taxon>
        <taxon>Tracheophyta</taxon>
        <taxon>Spermatophyta</taxon>
        <taxon>Magnoliopsida</taxon>
        <taxon>eudicotyledons</taxon>
        <taxon>Gunneridae</taxon>
        <taxon>Pentapetalae</taxon>
        <taxon>rosids</taxon>
        <taxon>malvids</taxon>
        <taxon>Brassicales</taxon>
        <taxon>Brassicaceae</taxon>
        <taxon>Camelineae</taxon>
        <taxon>Arabidopsis</taxon>
    </lineage>
</organism>
<feature type="chain" id="PRO_0000405276" description="ATP-dependent DNA helicase DDM1">
    <location>
        <begin position="1"/>
        <end position="764"/>
    </location>
</feature>
<feature type="domain" description="Helicase ATP-binding" evidence="3">
    <location>
        <begin position="214"/>
        <end position="382"/>
    </location>
</feature>
<feature type="domain" description="Helicase C-terminal" evidence="4">
    <location>
        <begin position="528"/>
        <end position="695"/>
    </location>
</feature>
<feature type="region of interest" description="Disordered" evidence="6">
    <location>
        <begin position="1"/>
        <end position="42"/>
    </location>
</feature>
<feature type="region of interest" description="Disordered" evidence="6">
    <location>
        <begin position="129"/>
        <end position="152"/>
    </location>
</feature>
<feature type="coiled-coil region" evidence="2">
    <location>
        <begin position="62"/>
        <end position="88"/>
    </location>
</feature>
<feature type="short sequence motif" description="Nuclear localization signal 1" evidence="5">
    <location>
        <begin position="145"/>
        <end position="152"/>
    </location>
</feature>
<feature type="short sequence motif" description="DEAH box" evidence="3">
    <location>
        <begin position="333"/>
        <end position="336"/>
    </location>
</feature>
<feature type="short sequence motif" description="Nuclear localization signal 2" evidence="5">
    <location>
        <begin position="429"/>
        <end position="436"/>
    </location>
</feature>
<feature type="compositionally biased region" description="Basic and acidic residues" evidence="6">
    <location>
        <begin position="17"/>
        <end position="26"/>
    </location>
</feature>
<feature type="compositionally biased region" description="Basic and acidic residues" evidence="6">
    <location>
        <begin position="132"/>
        <end position="142"/>
    </location>
</feature>
<feature type="binding site" evidence="3">
    <location>
        <begin position="227"/>
        <end position="234"/>
    </location>
    <ligand>
        <name>ATP</name>
        <dbReference type="ChEBI" id="CHEBI:30616"/>
    </ligand>
</feature>
<feature type="sequence conflict" description="In Ref. 5; AAX22754/AAX22755." evidence="47" ref="5">
    <original>I</original>
    <variation>T</variation>
    <location>
        <position position="176"/>
    </location>
</feature>
<feature type="sequence conflict" description="In Ref. 5; AAX22754/AAX22755." evidence="47" ref="5">
    <original>I</original>
    <variation>M</variation>
    <location>
        <position position="187"/>
    </location>
</feature>
<feature type="sequence conflict" description="In Ref. 5; AAX22754/AAX22755." evidence="47" ref="5">
    <original>C</original>
    <variation>F</variation>
    <location>
        <position position="434"/>
    </location>
</feature>
<feature type="helix" evidence="50">
    <location>
        <begin position="184"/>
        <end position="193"/>
    </location>
</feature>
<feature type="helix" evidence="50">
    <location>
        <begin position="204"/>
        <end position="219"/>
    </location>
</feature>
<feature type="strand" evidence="50">
    <location>
        <begin position="223"/>
        <end position="226"/>
    </location>
</feature>
<feature type="strand" evidence="50">
    <location>
        <begin position="229"/>
        <end position="231"/>
    </location>
</feature>
<feature type="helix" evidence="50">
    <location>
        <begin position="233"/>
        <end position="246"/>
    </location>
</feature>
<feature type="strand" evidence="50">
    <location>
        <begin position="253"/>
        <end position="256"/>
    </location>
</feature>
<feature type="helix" evidence="50">
    <location>
        <begin position="259"/>
        <end position="271"/>
    </location>
</feature>
<feature type="strand" evidence="50">
    <location>
        <begin position="278"/>
        <end position="281"/>
    </location>
</feature>
<feature type="helix" evidence="50">
    <location>
        <begin position="285"/>
        <end position="295"/>
    </location>
</feature>
<feature type="strand" evidence="50">
    <location>
        <begin position="306"/>
        <end position="309"/>
    </location>
</feature>
<feature type="helix" evidence="50">
    <location>
        <begin position="311"/>
        <end position="317"/>
    </location>
</feature>
<feature type="helix" evidence="50">
    <location>
        <begin position="318"/>
        <end position="322"/>
    </location>
</feature>
<feature type="strand" evidence="50">
    <location>
        <begin position="327"/>
        <end position="334"/>
    </location>
</feature>
<feature type="helix" evidence="50">
    <location>
        <begin position="335"/>
        <end position="338"/>
    </location>
</feature>
<feature type="strand" evidence="48">
    <location>
        <begin position="339"/>
        <end position="341"/>
    </location>
</feature>
<feature type="helix" evidence="50">
    <location>
        <begin position="344"/>
        <end position="351"/>
    </location>
</feature>
<feature type="strand" evidence="50">
    <location>
        <begin position="354"/>
        <end position="356"/>
    </location>
</feature>
<feature type="strand" evidence="50">
    <location>
        <begin position="358"/>
        <end position="363"/>
    </location>
</feature>
<feature type="strand" evidence="50">
    <location>
        <begin position="367"/>
        <end position="370"/>
    </location>
</feature>
<feature type="helix" evidence="50">
    <location>
        <begin position="371"/>
        <end position="379"/>
    </location>
</feature>
<feature type="turn" evidence="50">
    <location>
        <begin position="381"/>
        <end position="383"/>
    </location>
</feature>
<feature type="helix" evidence="50">
    <location>
        <begin position="387"/>
        <end position="393"/>
    </location>
</feature>
<feature type="turn" evidence="48">
    <location>
        <begin position="396"/>
        <end position="398"/>
    </location>
</feature>
<feature type="turn" evidence="51">
    <location>
        <begin position="403"/>
        <end position="407"/>
    </location>
</feature>
<feature type="helix" evidence="50">
    <location>
        <begin position="411"/>
        <end position="423"/>
    </location>
</feature>
<feature type="turn" evidence="50">
    <location>
        <begin position="424"/>
        <end position="427"/>
    </location>
</feature>
<feature type="turn" evidence="50">
    <location>
        <begin position="433"/>
        <end position="435"/>
    </location>
</feature>
<feature type="strand" evidence="50">
    <location>
        <begin position="438"/>
        <end position="440"/>
    </location>
</feature>
<feature type="strand" evidence="50">
    <location>
        <begin position="443"/>
        <end position="451"/>
    </location>
</feature>
<feature type="helix" evidence="50">
    <location>
        <begin position="454"/>
        <end position="464"/>
    </location>
</feature>
<feature type="helix" evidence="50">
    <location>
        <begin position="468"/>
        <end position="471"/>
    </location>
</feature>
<feature type="helix" evidence="50">
    <location>
        <begin position="489"/>
        <end position="497"/>
    </location>
</feature>
<feature type="helix" evidence="50">
    <location>
        <begin position="500"/>
        <end position="508"/>
    </location>
</feature>
<feature type="helix" evidence="50">
    <location>
        <begin position="516"/>
        <end position="522"/>
    </location>
</feature>
<feature type="helix" evidence="50">
    <location>
        <begin position="526"/>
        <end position="539"/>
    </location>
</feature>
<feature type="strand" evidence="50">
    <location>
        <begin position="543"/>
        <end position="549"/>
    </location>
</feature>
<feature type="helix" evidence="50">
    <location>
        <begin position="550"/>
        <end position="563"/>
    </location>
</feature>
<feature type="strand" evidence="50">
    <location>
        <begin position="567"/>
        <end position="570"/>
    </location>
</feature>
<feature type="strand" evidence="50">
    <location>
        <begin position="572"/>
        <end position="574"/>
    </location>
</feature>
<feature type="helix" evidence="50">
    <location>
        <begin position="576"/>
        <end position="586"/>
    </location>
</feature>
<feature type="strand" evidence="49">
    <location>
        <begin position="588"/>
        <end position="590"/>
    </location>
</feature>
<feature type="strand" evidence="50">
    <location>
        <begin position="595"/>
        <end position="599"/>
    </location>
</feature>
<feature type="turn" evidence="50">
    <location>
        <begin position="600"/>
        <end position="604"/>
    </location>
</feature>
<feature type="strand" evidence="50">
    <location>
        <begin position="614"/>
        <end position="619"/>
    </location>
</feature>
<feature type="helix" evidence="50">
    <location>
        <begin position="624"/>
        <end position="631"/>
    </location>
</feature>
<feature type="turn" evidence="50">
    <location>
        <begin position="632"/>
        <end position="634"/>
    </location>
</feature>
<feature type="strand" evidence="50">
    <location>
        <begin position="643"/>
        <end position="654"/>
    </location>
</feature>
<feature type="helix" evidence="50">
    <location>
        <begin position="655"/>
        <end position="670"/>
    </location>
</feature>
<feature type="helix" evidence="50">
    <location>
        <begin position="706"/>
        <end position="710"/>
    </location>
</feature>
<feature type="helix" evidence="50">
    <location>
        <begin position="715"/>
        <end position="722"/>
    </location>
</feature>
<feature type="turn" evidence="50">
    <location>
        <begin position="725"/>
        <end position="727"/>
    </location>
</feature>
<feature type="strand" evidence="50">
    <location>
        <begin position="743"/>
        <end position="745"/>
    </location>
</feature>
<feature type="strand" evidence="50">
    <location>
        <begin position="748"/>
        <end position="750"/>
    </location>
</feature>
<feature type="strand" evidence="50">
    <location>
        <begin position="753"/>
        <end position="755"/>
    </location>
</feature>
<feature type="helix" evidence="50">
    <location>
        <begin position="760"/>
        <end position="763"/>
    </location>
</feature>
<proteinExistence type="evidence at protein level"/>